<keyword id="KW-0963">Cytoplasm</keyword>
<keyword id="KW-0413">Isomerase</keyword>
<keyword id="KW-0627">Porphyrin biosynthesis</keyword>
<keyword id="KW-0663">Pyridoxal phosphate</keyword>
<reference key="1">
    <citation type="journal article" date="2009" name="Proc. Natl. Acad. Sci. U.S.A.">
        <title>Hamiltonella defensa, genome evolution of protective bacterial endosymbiont from pathogenic ancestors.</title>
        <authorList>
            <person name="Degnan P.H."/>
            <person name="Yu Y."/>
            <person name="Sisneros N."/>
            <person name="Wing R.A."/>
            <person name="Moran N.A."/>
        </authorList>
    </citation>
    <scope>NUCLEOTIDE SEQUENCE [LARGE SCALE GENOMIC DNA]</scope>
    <source>
        <strain>5AT</strain>
    </source>
</reference>
<evidence type="ECO:0000255" key="1">
    <source>
        <dbReference type="HAMAP-Rule" id="MF_00375"/>
    </source>
</evidence>
<gene>
    <name evidence="1" type="primary">hemL</name>
    <name type="ordered locus">HDEF_1725</name>
</gene>
<proteinExistence type="inferred from homology"/>
<protein>
    <recommendedName>
        <fullName evidence="1">Glutamate-1-semialdehyde 2,1-aminomutase</fullName>
        <shortName evidence="1">GSA</shortName>
        <ecNumber evidence="1">5.4.3.8</ecNumber>
    </recommendedName>
    <alternativeName>
        <fullName evidence="1">Glutamate-1-semialdehyde aminotransferase</fullName>
        <shortName evidence="1">GSA-AT</shortName>
    </alternativeName>
</protein>
<comment type="catalytic activity">
    <reaction evidence="1">
        <text>(S)-4-amino-5-oxopentanoate = 5-aminolevulinate</text>
        <dbReference type="Rhea" id="RHEA:14265"/>
        <dbReference type="ChEBI" id="CHEBI:57501"/>
        <dbReference type="ChEBI" id="CHEBI:356416"/>
        <dbReference type="EC" id="5.4.3.8"/>
    </reaction>
</comment>
<comment type="cofactor">
    <cofactor evidence="1">
        <name>pyridoxal 5'-phosphate</name>
        <dbReference type="ChEBI" id="CHEBI:597326"/>
    </cofactor>
</comment>
<comment type="pathway">
    <text evidence="1">Porphyrin-containing compound metabolism; protoporphyrin-IX biosynthesis; 5-aminolevulinate from L-glutamyl-tRNA(Glu): step 2/2.</text>
</comment>
<comment type="subunit">
    <text evidence="1">Homodimer.</text>
</comment>
<comment type="subcellular location">
    <subcellularLocation>
        <location evidence="1">Cytoplasm</location>
    </subcellularLocation>
</comment>
<comment type="similarity">
    <text evidence="1">Belongs to the class-III pyridoxal-phosphate-dependent aminotransferase family. HemL subfamily.</text>
</comment>
<feature type="chain" id="PRO_0000382321" description="Glutamate-1-semialdehyde 2,1-aminomutase">
    <location>
        <begin position="1"/>
        <end position="428"/>
    </location>
</feature>
<feature type="modified residue" description="N6-(pyridoxal phosphate)lysine" evidence="1">
    <location>
        <position position="265"/>
    </location>
</feature>
<dbReference type="EC" id="5.4.3.8" evidence="1"/>
<dbReference type="EMBL" id="CP001277">
    <property type="protein sequence ID" value="ACQ68328.1"/>
    <property type="molecule type" value="Genomic_DNA"/>
</dbReference>
<dbReference type="RefSeq" id="WP_015874092.1">
    <property type="nucleotide sequence ID" value="NC_012751.1"/>
</dbReference>
<dbReference type="SMR" id="C4K6Y5"/>
<dbReference type="STRING" id="572265.HDEF_1725"/>
<dbReference type="GeneID" id="66261320"/>
<dbReference type="KEGG" id="hde:HDEF_1725"/>
<dbReference type="eggNOG" id="COG0001">
    <property type="taxonomic scope" value="Bacteria"/>
</dbReference>
<dbReference type="HOGENOM" id="CLU_016922_1_5_6"/>
<dbReference type="UniPathway" id="UPA00251">
    <property type="reaction ID" value="UER00317"/>
</dbReference>
<dbReference type="Proteomes" id="UP000002334">
    <property type="component" value="Chromosome"/>
</dbReference>
<dbReference type="GO" id="GO:0005737">
    <property type="term" value="C:cytoplasm"/>
    <property type="evidence" value="ECO:0007669"/>
    <property type="project" value="UniProtKB-SubCell"/>
</dbReference>
<dbReference type="GO" id="GO:0042286">
    <property type="term" value="F:glutamate-1-semialdehyde 2,1-aminomutase activity"/>
    <property type="evidence" value="ECO:0007669"/>
    <property type="project" value="UniProtKB-UniRule"/>
</dbReference>
<dbReference type="GO" id="GO:0030170">
    <property type="term" value="F:pyridoxal phosphate binding"/>
    <property type="evidence" value="ECO:0007669"/>
    <property type="project" value="InterPro"/>
</dbReference>
<dbReference type="GO" id="GO:0008483">
    <property type="term" value="F:transaminase activity"/>
    <property type="evidence" value="ECO:0007669"/>
    <property type="project" value="InterPro"/>
</dbReference>
<dbReference type="GO" id="GO:0006782">
    <property type="term" value="P:protoporphyrinogen IX biosynthetic process"/>
    <property type="evidence" value="ECO:0007669"/>
    <property type="project" value="UniProtKB-UniRule"/>
</dbReference>
<dbReference type="CDD" id="cd00610">
    <property type="entry name" value="OAT_like"/>
    <property type="match status" value="1"/>
</dbReference>
<dbReference type="FunFam" id="3.40.640.10:FF:000021">
    <property type="entry name" value="Glutamate-1-semialdehyde 2,1-aminomutase"/>
    <property type="match status" value="1"/>
</dbReference>
<dbReference type="FunFam" id="3.90.1150.10:FF:000012">
    <property type="entry name" value="Glutamate-1-semialdehyde 2,1-aminomutase"/>
    <property type="match status" value="1"/>
</dbReference>
<dbReference type="Gene3D" id="3.90.1150.10">
    <property type="entry name" value="Aspartate Aminotransferase, domain 1"/>
    <property type="match status" value="1"/>
</dbReference>
<dbReference type="Gene3D" id="3.40.640.10">
    <property type="entry name" value="Type I PLP-dependent aspartate aminotransferase-like (Major domain)"/>
    <property type="match status" value="1"/>
</dbReference>
<dbReference type="HAMAP" id="MF_00375">
    <property type="entry name" value="HemL_aminotrans_3"/>
    <property type="match status" value="1"/>
</dbReference>
<dbReference type="InterPro" id="IPR004639">
    <property type="entry name" value="4pyrrol_synth_GluAld_NH2Trfase"/>
</dbReference>
<dbReference type="InterPro" id="IPR005814">
    <property type="entry name" value="Aminotrans_3"/>
</dbReference>
<dbReference type="InterPro" id="IPR049704">
    <property type="entry name" value="Aminotrans_3_PPA_site"/>
</dbReference>
<dbReference type="InterPro" id="IPR015424">
    <property type="entry name" value="PyrdxlP-dep_Trfase"/>
</dbReference>
<dbReference type="InterPro" id="IPR015421">
    <property type="entry name" value="PyrdxlP-dep_Trfase_major"/>
</dbReference>
<dbReference type="InterPro" id="IPR015422">
    <property type="entry name" value="PyrdxlP-dep_Trfase_small"/>
</dbReference>
<dbReference type="NCBIfam" id="TIGR00713">
    <property type="entry name" value="hemL"/>
    <property type="match status" value="1"/>
</dbReference>
<dbReference type="NCBIfam" id="NF000818">
    <property type="entry name" value="PRK00062.1"/>
    <property type="match status" value="1"/>
</dbReference>
<dbReference type="PANTHER" id="PTHR43713">
    <property type="entry name" value="GLUTAMATE-1-SEMIALDEHYDE 2,1-AMINOMUTASE"/>
    <property type="match status" value="1"/>
</dbReference>
<dbReference type="PANTHER" id="PTHR43713:SF3">
    <property type="entry name" value="GLUTAMATE-1-SEMIALDEHYDE 2,1-AMINOMUTASE 1, CHLOROPLASTIC-RELATED"/>
    <property type="match status" value="1"/>
</dbReference>
<dbReference type="Pfam" id="PF00202">
    <property type="entry name" value="Aminotran_3"/>
    <property type="match status" value="1"/>
</dbReference>
<dbReference type="SUPFAM" id="SSF53383">
    <property type="entry name" value="PLP-dependent transferases"/>
    <property type="match status" value="1"/>
</dbReference>
<dbReference type="PROSITE" id="PS00600">
    <property type="entry name" value="AA_TRANSFER_CLASS_3"/>
    <property type="match status" value="1"/>
</dbReference>
<organism>
    <name type="scientific">Hamiltonella defensa subsp. Acyrthosiphon pisum (strain 5AT)</name>
    <dbReference type="NCBI Taxonomy" id="572265"/>
    <lineage>
        <taxon>Bacteria</taxon>
        <taxon>Pseudomonadati</taxon>
        <taxon>Pseudomonadota</taxon>
        <taxon>Gammaproteobacteria</taxon>
        <taxon>Enterobacterales</taxon>
        <taxon>Enterobacteriaceae</taxon>
        <taxon>aphid secondary symbionts</taxon>
        <taxon>Candidatus Hamiltonella</taxon>
    </lineage>
</organism>
<name>GSA_HAMD5</name>
<sequence>MNDSNKLYDLAQCFIPGGVNSPVRAFQGVDGKPFFVEKAGGAYLYDVDGRAYIDYVGSWGPMILGHRHPVICDALTKAIENGISFGAPTEIEVKMAQLLTQLMPSMDMVRMVNSGTEATMSAIRLARGFTKRDKIIKFEGCYHGHSDCLLVKAGSGALTLGQADSPGVPKDFAQHTLICTYNDLSSVRKNLEDYPKEVAAIIVEPVAGNMNCILPSENFLPGLRQLCDEFGALLIMDEVMTGFRVALGGAQEYYNIKPDLTCLGKIIGGGMPVAAFGGRKEVMSILAPLGPVYQAETLSGHPLGMAAGFACLTELARPGLHKKLTELTTLLVLNLKKAAQEHNIPLIINHLGGMFGFFFTDAKTVTCYEDVKKCNIERFKRFFYFMLKEGIYFAPSAFEAGFMSLAHGVEEIEKTISSARRCFAQSRF</sequence>
<accession>C4K6Y5</accession>